<organism>
    <name type="scientific">Homo sapiens</name>
    <name type="common">Human</name>
    <dbReference type="NCBI Taxonomy" id="9606"/>
    <lineage>
        <taxon>Eukaryota</taxon>
        <taxon>Metazoa</taxon>
        <taxon>Chordata</taxon>
        <taxon>Craniata</taxon>
        <taxon>Vertebrata</taxon>
        <taxon>Euteleostomi</taxon>
        <taxon>Mammalia</taxon>
        <taxon>Eutheria</taxon>
        <taxon>Euarchontoglires</taxon>
        <taxon>Primates</taxon>
        <taxon>Haplorrhini</taxon>
        <taxon>Catarrhini</taxon>
        <taxon>Hominidae</taxon>
        <taxon>Homo</taxon>
    </lineage>
</organism>
<dbReference type="EC" id="3.1.-.-"/>
<dbReference type="EC" id="2.3.2.27"/>
<dbReference type="EMBL" id="M29474">
    <property type="protein sequence ID" value="AAA60248.1"/>
    <property type="molecule type" value="mRNA"/>
</dbReference>
<dbReference type="EMBL" id="AY130302">
    <property type="protein sequence ID" value="AAM77798.1"/>
    <property type="status" value="ALT_SEQ"/>
    <property type="molecule type" value="Genomic_DNA"/>
</dbReference>
<dbReference type="EMBL" id="AC061999">
    <property type="status" value="NOT_ANNOTATED_CDS"/>
    <property type="molecule type" value="Genomic_DNA"/>
</dbReference>
<dbReference type="EMBL" id="AC139427">
    <property type="status" value="NOT_ANNOTATED_CDS"/>
    <property type="molecule type" value="Genomic_DNA"/>
</dbReference>
<dbReference type="EMBL" id="BC037344">
    <property type="protein sequence ID" value="AAH37344.1"/>
    <property type="molecule type" value="mRNA"/>
</dbReference>
<dbReference type="CCDS" id="CCDS7902.1">
    <molecule id="P15918-1"/>
</dbReference>
<dbReference type="PIR" id="A33754">
    <property type="entry name" value="A33754"/>
</dbReference>
<dbReference type="RefSeq" id="NP_000439.2">
    <molecule id="P15918-1"/>
    <property type="nucleotide sequence ID" value="NM_000448.3"/>
</dbReference>
<dbReference type="RefSeq" id="NP_001364206.1">
    <molecule id="P15918-1"/>
    <property type="nucleotide sequence ID" value="NM_001377277.1"/>
</dbReference>
<dbReference type="RefSeq" id="NP_001364207.1">
    <molecule id="P15918-1"/>
    <property type="nucleotide sequence ID" value="NM_001377278.1"/>
</dbReference>
<dbReference type="RefSeq" id="NP_001364208.1">
    <molecule id="P15918-1"/>
    <property type="nucleotide sequence ID" value="NM_001377279.1"/>
</dbReference>
<dbReference type="RefSeq" id="NP_001364209.1">
    <molecule id="P15918-1"/>
    <property type="nucleotide sequence ID" value="NM_001377280.1"/>
</dbReference>
<dbReference type="RefSeq" id="XP_005253098.1">
    <property type="nucleotide sequence ID" value="XM_005253041.4"/>
</dbReference>
<dbReference type="RefSeq" id="XP_011518552.1">
    <property type="nucleotide sequence ID" value="XM_011520250.2"/>
</dbReference>
<dbReference type="RefSeq" id="XP_047283340.1">
    <molecule id="P15918-1"/>
    <property type="nucleotide sequence ID" value="XM_047427384.1"/>
</dbReference>
<dbReference type="SMR" id="P15918"/>
<dbReference type="BioGRID" id="111832">
    <property type="interactions" value="30"/>
</dbReference>
<dbReference type="CORUM" id="P15918"/>
<dbReference type="FunCoup" id="P15918">
    <property type="interactions" value="486"/>
</dbReference>
<dbReference type="IntAct" id="P15918">
    <property type="interactions" value="15"/>
</dbReference>
<dbReference type="MINT" id="P15918"/>
<dbReference type="STRING" id="9606.ENSP00000299440"/>
<dbReference type="CarbonylDB" id="P15918"/>
<dbReference type="iPTMnet" id="P15918"/>
<dbReference type="PhosphoSitePlus" id="P15918"/>
<dbReference type="BioMuta" id="RAG1"/>
<dbReference type="DMDM" id="313104166"/>
<dbReference type="jPOST" id="P15918"/>
<dbReference type="MassIVE" id="P15918"/>
<dbReference type="PaxDb" id="9606-ENSP00000299440"/>
<dbReference type="PeptideAtlas" id="P15918"/>
<dbReference type="Antibodypedia" id="42779">
    <property type="antibodies" value="121 antibodies from 26 providers"/>
</dbReference>
<dbReference type="DNASU" id="5896"/>
<dbReference type="Ensembl" id="ENST00000299440.6">
    <molecule id="P15918-1"/>
    <property type="protein sequence ID" value="ENSP00000299440.5"/>
    <property type="gene ID" value="ENSG00000166349.11"/>
</dbReference>
<dbReference type="Ensembl" id="ENST00000534663.1">
    <molecule id="P15918-2"/>
    <property type="protein sequence ID" value="ENSP00000434610.1"/>
    <property type="gene ID" value="ENSG00000166349.11"/>
</dbReference>
<dbReference type="Ensembl" id="ENST00000697713.1">
    <molecule id="P15918-1"/>
    <property type="protein sequence ID" value="ENSP00000513411.1"/>
    <property type="gene ID" value="ENSG00000166349.11"/>
</dbReference>
<dbReference type="Ensembl" id="ENST00000697714.1">
    <molecule id="P15918-1"/>
    <property type="protein sequence ID" value="ENSP00000513412.1"/>
    <property type="gene ID" value="ENSG00000166349.11"/>
</dbReference>
<dbReference type="Ensembl" id="ENST00000697715.1">
    <molecule id="P15918-1"/>
    <property type="protein sequence ID" value="ENSP00000513413.1"/>
    <property type="gene ID" value="ENSG00000166349.11"/>
</dbReference>
<dbReference type="GeneID" id="5896"/>
<dbReference type="KEGG" id="hsa:5896"/>
<dbReference type="MANE-Select" id="ENST00000299440.6">
    <property type="protein sequence ID" value="ENSP00000299440.5"/>
    <property type="RefSeq nucleotide sequence ID" value="NM_000448.3"/>
    <property type="RefSeq protein sequence ID" value="NP_000439.2"/>
</dbReference>
<dbReference type="UCSC" id="uc001mwt.4">
    <molecule id="P15918-1"/>
    <property type="organism name" value="human"/>
</dbReference>
<dbReference type="AGR" id="HGNC:9831"/>
<dbReference type="CTD" id="5896"/>
<dbReference type="DisGeNET" id="5896"/>
<dbReference type="GeneCards" id="RAG1"/>
<dbReference type="HGNC" id="HGNC:9831">
    <property type="gene designation" value="RAG1"/>
</dbReference>
<dbReference type="HPA" id="ENSG00000166349">
    <property type="expression patterns" value="Tissue enriched (lymphoid)"/>
</dbReference>
<dbReference type="MalaCards" id="RAG1"/>
<dbReference type="MIM" id="179615">
    <property type="type" value="gene"/>
</dbReference>
<dbReference type="MIM" id="233650">
    <property type="type" value="phenotype"/>
</dbReference>
<dbReference type="MIM" id="601457">
    <property type="type" value="phenotype"/>
</dbReference>
<dbReference type="MIM" id="603554">
    <property type="type" value="phenotype"/>
</dbReference>
<dbReference type="MIM" id="609889">
    <property type="type" value="phenotype"/>
</dbReference>
<dbReference type="neXtProt" id="NX_P15918"/>
<dbReference type="OpenTargets" id="ENSG00000166349"/>
<dbReference type="Orphanet" id="231154">
    <property type="disease" value="Combined immunodeficiency due to partial RAG1 deficiency"/>
</dbReference>
<dbReference type="Orphanet" id="157949">
    <property type="disease" value="Combined immunodeficiency with granulomatosis"/>
</dbReference>
<dbReference type="Orphanet" id="39041">
    <property type="disease" value="Omenn syndrome"/>
</dbReference>
<dbReference type="Orphanet" id="331206">
    <property type="disease" value="Severe combined immunodeficiency due to complete RAG1/2 deficiency"/>
</dbReference>
<dbReference type="PharmGKB" id="PA34185"/>
<dbReference type="VEuPathDB" id="HostDB:ENSG00000166349"/>
<dbReference type="eggNOG" id="ENOG502QSFV">
    <property type="taxonomic scope" value="Eukaryota"/>
</dbReference>
<dbReference type="GeneTree" id="ENSGT00390000008679"/>
<dbReference type="HOGENOM" id="CLU_010909_0_0_1"/>
<dbReference type="InParanoid" id="P15918"/>
<dbReference type="OMA" id="WKFKLFK"/>
<dbReference type="OrthoDB" id="6270329at2759"/>
<dbReference type="PAN-GO" id="P15918">
    <property type="GO annotations" value="10 GO annotations based on evolutionary models"/>
</dbReference>
<dbReference type="PhylomeDB" id="P15918"/>
<dbReference type="TreeFam" id="TF331926"/>
<dbReference type="PathwayCommons" id="P15918"/>
<dbReference type="Reactome" id="R-HSA-1266695">
    <property type="pathway name" value="Interleukin-7 signaling"/>
</dbReference>
<dbReference type="Reactome" id="R-HSA-5687128">
    <property type="pathway name" value="MAPK6/MAPK4 signaling"/>
</dbReference>
<dbReference type="SignaLink" id="P15918"/>
<dbReference type="SIGNOR" id="P15918"/>
<dbReference type="BioGRID-ORCS" id="5896">
    <property type="hits" value="10 hits in 1200 CRISPR screens"/>
</dbReference>
<dbReference type="GenomeRNAi" id="5896"/>
<dbReference type="Pharos" id="P15918">
    <property type="development level" value="Tbio"/>
</dbReference>
<dbReference type="PRO" id="PR:P15918"/>
<dbReference type="Proteomes" id="UP000005640">
    <property type="component" value="Chromosome 11"/>
</dbReference>
<dbReference type="RNAct" id="P15918">
    <property type="molecule type" value="protein"/>
</dbReference>
<dbReference type="Bgee" id="ENSG00000166349">
    <property type="expression patterns" value="Expressed in thymus and 104 other cell types or tissues"/>
</dbReference>
<dbReference type="GO" id="GO:0097519">
    <property type="term" value="C:DNA recombinase complex"/>
    <property type="evidence" value="ECO:0000318"/>
    <property type="project" value="GO_Central"/>
</dbReference>
<dbReference type="GO" id="GO:1905347">
    <property type="term" value="C:endodeoxyribonuclease complex"/>
    <property type="evidence" value="ECO:0000318"/>
    <property type="project" value="GO_Central"/>
</dbReference>
<dbReference type="GO" id="GO:0005654">
    <property type="term" value="C:nucleoplasm"/>
    <property type="evidence" value="ECO:0000304"/>
    <property type="project" value="Reactome"/>
</dbReference>
<dbReference type="GO" id="GO:0005634">
    <property type="term" value="C:nucleus"/>
    <property type="evidence" value="ECO:0000250"/>
    <property type="project" value="UniProtKB"/>
</dbReference>
<dbReference type="GO" id="GO:0003677">
    <property type="term" value="F:DNA binding"/>
    <property type="evidence" value="ECO:0000304"/>
    <property type="project" value="ProtInc"/>
</dbReference>
<dbReference type="GO" id="GO:0004519">
    <property type="term" value="F:endonuclease activity"/>
    <property type="evidence" value="ECO:0000250"/>
    <property type="project" value="UniProtKB"/>
</dbReference>
<dbReference type="GO" id="GO:0042393">
    <property type="term" value="F:histone binding"/>
    <property type="evidence" value="ECO:0000250"/>
    <property type="project" value="UniProtKB"/>
</dbReference>
<dbReference type="GO" id="GO:0046872">
    <property type="term" value="F:metal ion binding"/>
    <property type="evidence" value="ECO:0000250"/>
    <property type="project" value="UniProtKB"/>
</dbReference>
<dbReference type="GO" id="GO:0042803">
    <property type="term" value="F:protein homodimerization activity"/>
    <property type="evidence" value="ECO:0000250"/>
    <property type="project" value="UniProtKB"/>
</dbReference>
<dbReference type="GO" id="GO:0043565">
    <property type="term" value="F:sequence-specific DNA binding"/>
    <property type="evidence" value="ECO:0000250"/>
    <property type="project" value="UniProtKB"/>
</dbReference>
<dbReference type="GO" id="GO:0061630">
    <property type="term" value="F:ubiquitin protein ligase activity"/>
    <property type="evidence" value="ECO:0000318"/>
    <property type="project" value="GO_Central"/>
</dbReference>
<dbReference type="GO" id="GO:0004842">
    <property type="term" value="F:ubiquitin-protein transferase activity"/>
    <property type="evidence" value="ECO:0000250"/>
    <property type="project" value="UniProtKB"/>
</dbReference>
<dbReference type="GO" id="GO:0008270">
    <property type="term" value="F:zinc ion binding"/>
    <property type="evidence" value="ECO:0000250"/>
    <property type="project" value="UniProtKB"/>
</dbReference>
<dbReference type="GO" id="GO:0002250">
    <property type="term" value="P:adaptive immune response"/>
    <property type="evidence" value="ECO:0000318"/>
    <property type="project" value="GO_Central"/>
</dbReference>
<dbReference type="GO" id="GO:0030183">
    <property type="term" value="P:B cell differentiation"/>
    <property type="evidence" value="ECO:0000250"/>
    <property type="project" value="UniProtKB"/>
</dbReference>
<dbReference type="GO" id="GO:0006325">
    <property type="term" value="P:chromatin organization"/>
    <property type="evidence" value="ECO:0007669"/>
    <property type="project" value="UniProtKB-KW"/>
</dbReference>
<dbReference type="GO" id="GO:0006310">
    <property type="term" value="P:DNA recombination"/>
    <property type="evidence" value="ECO:0000304"/>
    <property type="project" value="ProtInc"/>
</dbReference>
<dbReference type="GO" id="GO:0006955">
    <property type="term" value="P:immune response"/>
    <property type="evidence" value="ECO:0000304"/>
    <property type="project" value="ProtInc"/>
</dbReference>
<dbReference type="GO" id="GO:0070244">
    <property type="term" value="P:negative regulation of thymocyte apoptotic process"/>
    <property type="evidence" value="ECO:0007669"/>
    <property type="project" value="Ensembl"/>
</dbReference>
<dbReference type="GO" id="GO:0045582">
    <property type="term" value="P:positive regulation of T cell differentiation"/>
    <property type="evidence" value="ECO:0007669"/>
    <property type="project" value="Ensembl"/>
</dbReference>
<dbReference type="GO" id="GO:0002331">
    <property type="term" value="P:pre-B cell allelic exclusion"/>
    <property type="evidence" value="ECO:0000250"/>
    <property type="project" value="UniProtKB"/>
</dbReference>
<dbReference type="GO" id="GO:0051865">
    <property type="term" value="P:protein autoubiquitination"/>
    <property type="evidence" value="ECO:0000250"/>
    <property type="project" value="UniProtKB"/>
</dbReference>
<dbReference type="GO" id="GO:2000822">
    <property type="term" value="P:regulation of behavioral fear response"/>
    <property type="evidence" value="ECO:0007669"/>
    <property type="project" value="Ensembl"/>
</dbReference>
<dbReference type="GO" id="GO:0033077">
    <property type="term" value="P:T cell differentiation in thymus"/>
    <property type="evidence" value="ECO:0000250"/>
    <property type="project" value="UniProtKB"/>
</dbReference>
<dbReference type="GO" id="GO:0043029">
    <property type="term" value="P:T cell homeostasis"/>
    <property type="evidence" value="ECO:0007669"/>
    <property type="project" value="Ensembl"/>
</dbReference>
<dbReference type="GO" id="GO:0048538">
    <property type="term" value="P:thymus development"/>
    <property type="evidence" value="ECO:0007669"/>
    <property type="project" value="Ensembl"/>
</dbReference>
<dbReference type="GO" id="GO:0033151">
    <property type="term" value="P:V(D)J recombination"/>
    <property type="evidence" value="ECO:0000315"/>
    <property type="project" value="CACAO"/>
</dbReference>
<dbReference type="GO" id="GO:0008542">
    <property type="term" value="P:visual learning"/>
    <property type="evidence" value="ECO:0007669"/>
    <property type="project" value="Ensembl"/>
</dbReference>
<dbReference type="CDD" id="cd16530">
    <property type="entry name" value="RING-HC_RAG1"/>
    <property type="match status" value="1"/>
</dbReference>
<dbReference type="FunFam" id="3.30.160.60:FF:000697">
    <property type="entry name" value="Recombination activating gene 1"/>
    <property type="match status" value="1"/>
</dbReference>
<dbReference type="FunFam" id="3.30.40.10:FF:000142">
    <property type="entry name" value="Recombination activating gene 1"/>
    <property type="match status" value="1"/>
</dbReference>
<dbReference type="Gene3D" id="6.10.140.510">
    <property type="match status" value="1"/>
</dbReference>
<dbReference type="Gene3D" id="3.30.160.60">
    <property type="entry name" value="Classic Zinc Finger"/>
    <property type="match status" value="1"/>
</dbReference>
<dbReference type="Gene3D" id="3.30.40.10">
    <property type="entry name" value="Zinc/RING finger domain, C3HC4 (zinc finger)"/>
    <property type="match status" value="1"/>
</dbReference>
<dbReference type="InterPro" id="IPR024627">
    <property type="entry name" value="RAG1"/>
</dbReference>
<dbReference type="InterPro" id="IPR035714">
    <property type="entry name" value="RAG1_imp-bd"/>
</dbReference>
<dbReference type="InterPro" id="IPR019485">
    <property type="entry name" value="RAG1_Znf"/>
</dbReference>
<dbReference type="InterPro" id="IPR023336">
    <property type="entry name" value="RAG_nonamer-bd_dom"/>
</dbReference>
<dbReference type="InterPro" id="IPR036236">
    <property type="entry name" value="Znf_C2H2_sf"/>
</dbReference>
<dbReference type="InterPro" id="IPR018957">
    <property type="entry name" value="Znf_C3HC4_RING-type"/>
</dbReference>
<dbReference type="InterPro" id="IPR001841">
    <property type="entry name" value="Znf_RING"/>
</dbReference>
<dbReference type="InterPro" id="IPR013083">
    <property type="entry name" value="Znf_RING/FYVE/PHD"/>
</dbReference>
<dbReference type="InterPro" id="IPR017907">
    <property type="entry name" value="Znf_RING_CS"/>
</dbReference>
<dbReference type="PANTHER" id="PTHR11539:SF0">
    <property type="entry name" value="V(D)J RECOMBINATION-ACTIVATING PROTEIN 1"/>
    <property type="match status" value="1"/>
</dbReference>
<dbReference type="PANTHER" id="PTHR11539">
    <property type="entry name" value="VDJ RECOMBINATION ACTIVATING PROTEIN 1 RAG1"/>
    <property type="match status" value="1"/>
</dbReference>
<dbReference type="Pfam" id="PF12940">
    <property type="entry name" value="RAG1"/>
    <property type="match status" value="1"/>
</dbReference>
<dbReference type="Pfam" id="PF12560">
    <property type="entry name" value="RAG1_imp_bd"/>
    <property type="match status" value="1"/>
</dbReference>
<dbReference type="Pfam" id="PF00097">
    <property type="entry name" value="zf-C3HC4"/>
    <property type="match status" value="1"/>
</dbReference>
<dbReference type="Pfam" id="PF10426">
    <property type="entry name" value="zf-RAG1"/>
    <property type="match status" value="1"/>
</dbReference>
<dbReference type="SMART" id="SM00184">
    <property type="entry name" value="RING"/>
    <property type="match status" value="1"/>
</dbReference>
<dbReference type="SUPFAM" id="SSF57667">
    <property type="entry name" value="beta-beta-alpha zinc fingers"/>
    <property type="match status" value="1"/>
</dbReference>
<dbReference type="SUPFAM" id="SSF57850">
    <property type="entry name" value="RING/U-box"/>
    <property type="match status" value="1"/>
</dbReference>
<dbReference type="PROSITE" id="PS51487">
    <property type="entry name" value="NBD"/>
    <property type="match status" value="1"/>
</dbReference>
<dbReference type="PROSITE" id="PS51765">
    <property type="entry name" value="ZF_RAG1"/>
    <property type="match status" value="1"/>
</dbReference>
<dbReference type="PROSITE" id="PS00518">
    <property type="entry name" value="ZF_RING_1"/>
    <property type="match status" value="1"/>
</dbReference>
<dbReference type="PROSITE" id="PS50089">
    <property type="entry name" value="ZF_RING_2"/>
    <property type="match status" value="1"/>
</dbReference>
<sequence>MAASFPPTLGLSSAPDEIQHPHIKFSEWKFKLFRVRSFEKTPEEAQKEKKDSFEGKPSLEQSPAVLDKADGQKPVPTQPLLKAHPKFSKKFHDNEKARGKAIHQANLRHLCRICGNSFRADEHNRRYPVHGPVDGKTLGLLRKKEKRATSWPDLIAKVFRIDVKADVDSIHPTEFCHNCWSIMHRKFSSAPCEVYFPRNVTMEWHPHTPSCDICNTARRGLKRKSLQPNLQLSKKLKTVLDQARQARQHKRRAQARISSKDVMKKIANCSKIHLSTKLLAVDFPEHFVKSISCQICEHILADPVETNCKHVFCRVCILRCLKVMGSYCPSCRYPCFPTDLESPVKSFLSVLNSLMVKCPAKECNEEVSLEKYNHHISSHKESKEIFVHINKGGRPRQHLLSLTRRAQKHRLRELKLQVKAFADKEEGGDVKSVCMTLFLLALRARNEHRQADELEAIMQGKGSGLQPAVCLAIRVNTFLSCSQYHKMYRTVKAITGRQIFQPLHALRNAEKVLLPGYHHFEWQPPLKNVSSSTDVGIIDGLSGLSSSVDDYPVDTIAKRFRYDSALVSALMDMEEDILEGMRSQDLDDYLNGPFTVVVKESCDGMGDVSEKHGSGPVVPEKAVRFSFTIMKITIAHSSQNVKVFEEAKPNSELCCKPLCLMLADESDHETLTAILSPLIAEREAMKSSELMLELGGILRTFKFIFRGTGYDEKLVREVEGLEASGSVYICTLCDATRLEASQNLVFHSITRSHAENLERYEVWRSNPYHESVEELRDRVKGVSAKPFIETVPSIDALHCDIGNAAEFYKIFQLEIGEVYKNPNASKEERKRWQATLDKHLRKKMNLKPIMRMNGNFARKLMTKETVDAVCELIPSEERHEALRELMDLYLKMKPVWRSSCPAKECPESLCQYSFNSQRFAELLSTKFKYRYEGKITNYFHKTLAHVPEIIERDGSIGAWASEGNESGNKLFRRFRKMNARQSKCYEMEDVLKHHWLYTSKYLQKFMNAHNALKTSGFTMNPQASLGDPLGIEDSLESQDSMEF</sequence>
<reference key="1">
    <citation type="journal article" date="1989" name="Cell">
        <title>The V(D)J recombination activating gene, RAG-1.</title>
        <authorList>
            <person name="Schatz D.G."/>
            <person name="Oettinger M.A."/>
            <person name="Baltimore D."/>
        </authorList>
    </citation>
    <scope>NUCLEOTIDE SEQUENCE [MRNA] (ISOFORM 1)</scope>
    <scope>VARIANT ARG-249</scope>
</reference>
<reference key="2">
    <citation type="submission" date="2002-07" db="EMBL/GenBank/DDBJ databases">
        <authorList>
            <consortium name="NIEHS SNPs program"/>
        </authorList>
    </citation>
    <scope>NUCLEOTIDE SEQUENCE [GENOMIC DNA]</scope>
</reference>
<reference key="3">
    <citation type="journal article" date="2006" name="Nature">
        <title>Human chromosome 11 DNA sequence and analysis including novel gene identification.</title>
        <authorList>
            <person name="Taylor T.D."/>
            <person name="Noguchi H."/>
            <person name="Totoki Y."/>
            <person name="Toyoda A."/>
            <person name="Kuroki Y."/>
            <person name="Dewar K."/>
            <person name="Lloyd C."/>
            <person name="Itoh T."/>
            <person name="Takeda T."/>
            <person name="Kim D.-W."/>
            <person name="She X."/>
            <person name="Barlow K.F."/>
            <person name="Bloom T."/>
            <person name="Bruford E."/>
            <person name="Chang J.L."/>
            <person name="Cuomo C.A."/>
            <person name="Eichler E."/>
            <person name="FitzGerald M.G."/>
            <person name="Jaffe D.B."/>
            <person name="LaButti K."/>
            <person name="Nicol R."/>
            <person name="Park H.-S."/>
            <person name="Seaman C."/>
            <person name="Sougnez C."/>
            <person name="Yang X."/>
            <person name="Zimmer A.R."/>
            <person name="Zody M.C."/>
            <person name="Birren B.W."/>
            <person name="Nusbaum C."/>
            <person name="Fujiyama A."/>
            <person name="Hattori M."/>
            <person name="Rogers J."/>
            <person name="Lander E.S."/>
            <person name="Sakaki Y."/>
        </authorList>
    </citation>
    <scope>NUCLEOTIDE SEQUENCE [LARGE SCALE GENOMIC DNA]</scope>
</reference>
<reference key="4">
    <citation type="journal article" date="2004" name="Genome Res.">
        <title>The status, quality, and expansion of the NIH full-length cDNA project: the Mammalian Gene Collection (MGC).</title>
        <authorList>
            <consortium name="The MGC Project Team"/>
        </authorList>
    </citation>
    <scope>NUCLEOTIDE SEQUENCE [LARGE SCALE MRNA] (ISOFORM 2)</scope>
    <scope>VARIANT ARG-249</scope>
    <source>
        <tissue>Testis</tissue>
    </source>
</reference>
<reference key="5">
    <citation type="journal article" date="1994" name="Proc. Natl. Acad. Sci. U.S.A.">
        <title>RAG-1 interacts with the repeated amino acid motif of the human homologue of the yeast protein SRP1.</title>
        <authorList>
            <person name="Cortes P."/>
            <person name="Ye Z.-S."/>
            <person name="Baltimore D."/>
        </authorList>
    </citation>
    <scope>IDENTIFICATION OF IMPORTIN ALPHA-1 BINDING DOMAIN</scope>
</reference>
<reference key="6">
    <citation type="journal article" date="1996" name="Hum. Mutat.">
        <title>Two new variants of RAG-1 protein predicted by SSCP.</title>
        <authorList>
            <person name="Nomdedeu J.F."/>
            <person name="Lasa A."/>
            <person name="Seminago R."/>
            <person name="Rubiol E."/>
            <person name="Baiget M."/>
            <person name="Soler J."/>
        </authorList>
    </citation>
    <scope>VARIANTS GLY-244 AND ARG-249</scope>
</reference>
<reference key="7">
    <citation type="journal article" date="1996" name="Science">
        <title>RAG mutations in human B cell-negative SCID.</title>
        <authorList>
            <person name="Schwarz K."/>
            <person name="Gauss G.H."/>
            <person name="Ludwig L."/>
            <person name="Pannicke U."/>
            <person name="Li Z."/>
            <person name="Linder D."/>
            <person name="Friedrich W."/>
            <person name="Seger R.A."/>
            <person name="Hansen-Hagge T.E."/>
            <person name="Desiderio S."/>
            <person name="Lieber M.R."/>
            <person name="Bartram C.R."/>
        </authorList>
    </citation>
    <scope>VARIANTS T(-)B(-)NK(+) SCID HIS-624; LYS-722; 774-GLU--PHE-1043 DEL; 897-ARG--PHE-1043 DEL AND 938-TYR--PHE-1043 DEL</scope>
    <scope>VARIANT VAL-156</scope>
    <scope>CHARACTERIZATION OF VARIANT VAL-156</scope>
    <scope>CHARACTERIZATION OF VARIANTS T(-)B(-)NK(+) SCID HIS-624; LYS-722 AND 938-TYR--PHE-1043 DEL</scope>
</reference>
<reference key="8">
    <citation type="journal article" date="1998" name="Cell">
        <title>Partial V(D)J recombination activity leads to Omenn syndrome.</title>
        <authorList>
            <person name="Villa A."/>
            <person name="Santagata S."/>
            <person name="Bozzi F."/>
            <person name="Giliani S."/>
            <person name="Frattini A."/>
            <person name="Imberti L."/>
            <person name="Gatta L.B."/>
            <person name="Ochs H.D."/>
            <person name="Schwarz K."/>
            <person name="Notarangelo L.D."/>
            <person name="Vezzoni P."/>
            <person name="Spanopoulou E."/>
        </authorList>
    </citation>
    <scope>VARIANTS OS CYS-396; HIS-396; GLY-429; HIS-561; CYS-561; HIS-737 AND CYS-912</scope>
</reference>
<reference key="9">
    <citation type="journal article" date="2000" name="Clin. Exp. Immunol.">
        <title>Characterization of immune function and analysis of RAG gene mutations in Omenn syndrome and related disorders.</title>
        <authorList>
            <person name="Wada T."/>
            <person name="Takei K."/>
            <person name="Kudo M."/>
            <person name="Shimura S."/>
            <person name="Kasahara Y."/>
            <person name="Koizumi S."/>
            <person name="Kawa-Ha K."/>
            <person name="Ishida Y."/>
            <person name="Imashuku S."/>
            <person name="Seki H."/>
            <person name="Yachie A."/>
        </authorList>
    </citation>
    <scope>VARIANTS OS CYS-396 AND ARG-885</scope>
</reference>
<reference key="10">
    <citation type="journal article" date="2001" name="Blood">
        <title>V(D)J recombination defects in lymphocytes due to RAG mutations: severe immunodeficiency with a spectrum of clinical presentations.</title>
        <authorList>
            <person name="Villa A."/>
            <person name="Sobacchi C."/>
            <person name="Notarangelo L.D."/>
            <person name="Bozzi F."/>
            <person name="Abinun M."/>
            <person name="Abrahamsen T.G."/>
            <person name="Arkwright P.D."/>
            <person name="Baniyash M."/>
            <person name="Brooks E.G."/>
            <person name="Conley M.E."/>
            <person name="Cortes P."/>
            <person name="Duse M."/>
            <person name="Fasth A."/>
            <person name="Filipovich A.M."/>
            <person name="Infante A.J."/>
            <person name="Jones A."/>
            <person name="Mazzolari E."/>
            <person name="Muller S.M."/>
            <person name="Pasic S."/>
            <person name="Rechavi G."/>
            <person name="Sacco M.G."/>
            <person name="Santagata S."/>
            <person name="Schroeder M.L."/>
            <person name="Seger R."/>
            <person name="Strina D."/>
            <person name="Ugazio A."/>
            <person name="Vaeliaho J."/>
            <person name="Vihinen M."/>
            <person name="Vogler L.B."/>
            <person name="Ochs H."/>
            <person name="Vezzoni P."/>
            <person name="Friedrich W."/>
            <person name="Schwarz K."/>
        </authorList>
    </citation>
    <scope>VARIANTS OS TYR-328; LEU-396; PRO-401; GLN-410; MET-433; VAL-435; VAL-444; HIS-474; TRP-507; CYS-522; SER-559; CYS-624; GLY-669; LEU-753 AND GLN-975</scope>
    <scope>VARIANT ILE-855</scope>
</reference>
<reference key="11">
    <citation type="journal article" date="2001" name="Blood">
        <title>Identification of anti-herpes simplex virus antibody-producing B cells in a patient with an atypical RAG1 immunodeficiency.</title>
        <authorList>
            <person name="Kumaki S."/>
            <person name="Villa A."/>
            <person name="Asada H."/>
            <person name="Kawai S."/>
            <person name="Ohashi Y."/>
            <person name="Takahashi M."/>
            <person name="Hakozaki I."/>
            <person name="Nitanai E."/>
            <person name="Minegishi M."/>
            <person name="Tsuchiya S."/>
        </authorList>
    </citation>
    <scope>VARIANTS SER-559 AND 897-ARG--PHE-1043 DEL</scope>
    <scope>CHARACTERIZATION OF VARIANTS SER-559 AND 897-ARG--PHE-1043 DEL</scope>
</reference>
<reference key="12">
    <citation type="journal article" date="2005" name="J. Clin. Invest.">
        <title>A novel immunodeficiency associated with hypomorphic RAG1 mutations and CMV infection.</title>
        <authorList>
            <person name="de Villartay J.-P."/>
            <person name="Lim A."/>
            <person name="Al-Mousa H."/>
            <person name="Dupont S."/>
            <person name="Dechanet-Merville J."/>
            <person name="Coumau-Gatbois E."/>
            <person name="Gougeon M.-L."/>
            <person name="Lemainque A."/>
            <person name="Eidenschenk C."/>
            <person name="Jouanguy E."/>
            <person name="Abel L."/>
            <person name="Casanova J.-L."/>
            <person name="Fischer A."/>
            <person name="Le Deist F."/>
        </authorList>
    </citation>
    <scope>VARIANTS T-CMVA TRP-841 AND PRO-981</scope>
</reference>
<reference key="13">
    <citation type="journal article" date="2008" name="N. Engl. J. Med.">
        <title>An immunodeficiency disease with RAG mutations and granulomas.</title>
        <authorList>
            <person name="Schuetz C."/>
            <person name="Huck K."/>
            <person name="Gudowius S."/>
            <person name="Megahed M."/>
            <person name="Feyen O."/>
            <person name="Hubner B."/>
            <person name="Schneider D.T."/>
            <person name="Manfras B."/>
            <person name="Pannicke U."/>
            <person name="Willemze R."/>
            <person name="Knuechel R."/>
            <person name="Goebel U."/>
            <person name="Schulz A."/>
            <person name="Borkhardt A."/>
            <person name="Friedrich W."/>
            <person name="Schwarz K."/>
            <person name="Niehues T."/>
        </authorList>
    </citation>
    <scope>VARIANTS CHIDG TRP-314; TRP-507; HIS-737; GLN-778 AND TRP-975</scope>
    <scope>CHARACTERIZATION OF VARIANTS CHIDG TRP-314; TRP-507; HIS-737; GLN-778 AND TRP-975</scope>
</reference>
<reference key="14">
    <citation type="journal article" date="2009" name="BMC Med. Genet.">
        <title>Molecular analysis of T-B-NK+ severe combined immunodeficiency and Omenn syndrome cases in Saudi Arabia.</title>
        <authorList>
            <person name="Alsmadi O."/>
            <person name="Al-Ghonaium A."/>
            <person name="Al-Muhsen S."/>
            <person name="Arnaout R."/>
            <person name="Al-Dhekri H."/>
            <person name="Al-Saud B."/>
            <person name="Al-Kayal F."/>
            <person name="Al-Saud H."/>
            <person name="Al-Mousa H."/>
        </authorList>
    </citation>
    <scope>VARIANTS T(-)B(-)NK(+) SCID MET-433; SER-559 AND HIS-624</scope>
    <scope>VARIANTS OS HIS-396 AND PRO-401</scope>
</reference>
<reference key="15">
    <citation type="journal article" date="2010" name="Pediatrics">
        <title>Highly variable clinical phenotypes of hypomorphic RAG1 mutations.</title>
        <authorList>
            <person name="Avila E.M."/>
            <person name="Uzel G."/>
            <person name="Hsu A."/>
            <person name="Milner J.D."/>
            <person name="Turner M.L."/>
            <person name="Pittaluga S."/>
            <person name="Freeman A.F."/>
            <person name="Holland S.M."/>
        </authorList>
    </citation>
    <scope>VARIANT CYS-474</scope>
</reference>
<reference key="16">
    <citation type="journal article" date="2011" name="Clin. Immunol.">
        <title>Novel mutations in RAG1/2 and ADA genes in Israeli patients presenting with T-B-SCID or Omenn syndrome.</title>
        <authorList>
            <person name="Dalal I."/>
            <person name="Tasher D."/>
            <person name="Somech R."/>
            <person name="Etzioni A."/>
            <person name="Garti B.Z."/>
            <person name="Lev D."/>
            <person name="Cohen S."/>
            <person name="Somekh E."/>
            <person name="Leshinsky-Silver E."/>
        </authorList>
    </citation>
    <scope>VARIANT OS GLN-454</scope>
</reference>
<reference key="17">
    <citation type="journal article" date="2011" name="Pediatr. Allergy Immunol.">
        <title>Clinical characteristics and molecular analysis of three Chinese children with Omenn syndrome.</title>
        <authorList>
            <person name="Zhang Z.Y."/>
            <person name="Zhao X.D."/>
            <person name="Jiang L.P."/>
            <person name="Liu E.M."/>
            <person name="Cui Y.X."/>
            <person name="Wang M."/>
            <person name="Wei H."/>
            <person name="Yu J."/>
            <person name="An Y.F."/>
            <person name="Yang X.Q."/>
        </authorList>
    </citation>
    <scope>VARIANT OS TRP-699</scope>
</reference>
<reference key="18">
    <citation type="journal article" date="2014" name="J. Allergy Clin. Immunol.">
        <title>A hypomorphic recombination-activating gene 1 (RAG1) mutation resulting in a phenotype resembling common variable immunodeficiency.</title>
        <authorList>
            <person name="Abolhassani H."/>
            <person name="Wang N."/>
            <person name="Aghamohammadi A."/>
            <person name="Rezaei N."/>
            <person name="Lee Y.N."/>
            <person name="Frugoni F."/>
            <person name="Notarangelo L.D."/>
            <person name="Pan-Hammarstroem Q."/>
            <person name="Hammarstroem L."/>
        </authorList>
    </citation>
    <scope>VARIANT TYR-358</scope>
    <scope>CHARACTERIZATION OF VARIANT TYR-358</scope>
</reference>
<reference key="19">
    <citation type="journal article" date="2015" name="J. Clin. Immunol.">
        <title>Identification of patients with RAG mutations previously diagnosed with common variable immunodeficiency disorders.</title>
        <authorList>
            <person name="Buchbinder D."/>
            <person name="Baker R."/>
            <person name="Lee Y.N."/>
            <person name="Ravell J."/>
            <person name="Zhang Y."/>
            <person name="McElwee J."/>
            <person name="Nugent D."/>
            <person name="Coonrod E.M."/>
            <person name="Durtschi J.D."/>
            <person name="Augustine N.H."/>
            <person name="Voelkerding K.V."/>
            <person name="Csomos K."/>
            <person name="Rosen L."/>
            <person name="Browne S."/>
            <person name="Walter J.E."/>
            <person name="Notarangelo L.D."/>
            <person name="Hill H.R."/>
            <person name="Kumanovics A."/>
        </authorList>
    </citation>
    <scope>VARIANTS CYS-522; ARG-612 AND 897-ARG--PHE-1043 DEL</scope>
</reference>
<reference key="20">
    <citation type="journal article" date="2017" name="Clin. Immunol.">
        <title>Evaluation of RAG1 mutations in an adult with combined immunodeficiency and progressive multifocal leukoencephalopathy.</title>
        <authorList>
            <person name="Schroeder C."/>
            <person name="Baerlecken N.T."/>
            <person name="Pannicke U."/>
            <person name="Doerk T."/>
            <person name="Witte T."/>
            <person name="Jacobs R."/>
            <person name="Stoll M."/>
            <person name="Schwarz K."/>
            <person name="Grimbacher B."/>
            <person name="Schmidt R.E."/>
            <person name="Atschekzei F."/>
        </authorList>
    </citation>
    <scope>VARIANTS ASP-375 AND CYS-474</scope>
    <scope>CHARACTERIZATION OF VARIANT CYS-474</scope>
</reference>
<comment type="function">
    <text evidence="1">Catalytic component of the RAG complex, a multiprotein complex that mediates the DNA cleavage phase during V(D)J recombination. V(D)J recombination assembles a diverse repertoire of immunoglobulin and T-cell receptor genes in developing B and T-lymphocytes through rearrangement of different V (variable), in some cases D (diversity), and J (joining) gene segments. In the RAG complex, RAG1 mediates the DNA-binding to the conserved recombination signal sequences (RSS) and catalyzes the DNA cleavage activities by introducing a double-strand break between the RSS and the adjacent coding segment. RAG2 is not a catalytic component but is required for all known catalytic activities. DNA cleavage occurs in 2 steps: a first nick is introduced in the top strand immediately upstream of the heptamer, generating a 3'-hydroxyl group that can attack the phosphodiester bond on the opposite strand in a direct transesterification reaction, thereby creating 4 DNA ends: 2 hairpin coding ends and 2 blunt, 5'-phosphorylated ends. The chromatin structure plays an essential role in the V(D)J recombination reactions and the presence of histone H3 trimethylated at 'Lys-4' (H3K4me3) stimulates both the nicking and haipinning steps. The RAG complex also plays a role in pre-B cell allelic exclusion, a process leading to expression of a single immunoglobulin heavy chain allele to enforce clonality and monospecific recognition by the B-cell antigen receptor (BCR) expressed on individual B-lymphocytes. The introduction of DNA breaks by the RAG complex on one immunoglobulin allele induces ATM-dependent repositioning of the other allele to pericentromeric heterochromatin, preventing accessibility to the RAG complex and recombination of the second allele. In addition to its endonuclease activity, RAG1 also acts as an E3 ubiquitin-protein ligase that mediates monoubiquitination of histone H3. Histone H3 monoubiquitination is required for the joining step of V(D)J recombination. Mediates polyubiquitination of KPNA1 (By similarity).</text>
</comment>
<comment type="catalytic activity">
    <reaction>
        <text>S-ubiquitinyl-[E2 ubiquitin-conjugating enzyme]-L-cysteine + [acceptor protein]-L-lysine = [E2 ubiquitin-conjugating enzyme]-L-cysteine + N(6)-ubiquitinyl-[acceptor protein]-L-lysine.</text>
        <dbReference type="EC" id="2.3.2.27"/>
    </reaction>
</comment>
<comment type="cofactor">
    <cofactor evidence="1">
        <name>Mg(2+)</name>
        <dbReference type="ChEBI" id="CHEBI:18420"/>
    </cofactor>
    <cofactor evidence="1">
        <name>Mn(2+)</name>
        <dbReference type="ChEBI" id="CHEBI:29035"/>
    </cofactor>
    <text evidence="1">Binds 1 divalent metal cation per subunit. Mg(2+) or Mn(2+).</text>
</comment>
<comment type="subunit">
    <text evidence="1">Homodimer. Component of the RAG complex composed of core components RAG1 and RAG2, and associated component HMGB1 or HMGB2. Interacts with DCAF1, leading to recruitment of the CUL4A-RBX1-DDB1-DCAF1/VPRBP complex to ubiquitinate proteins and limit error-prone repair during V(D)J recombination (By similarity).</text>
</comment>
<comment type="interaction">
    <interactant intactId="EBI-1755109">
        <id>P15918</id>
    </interactant>
    <interactant intactId="EBI-389883">
        <id>P16333</id>
        <label>NCK1</label>
    </interactant>
    <organismsDiffer>false</organismsDiffer>
    <experiments>2</experiments>
</comment>
<comment type="subcellular location">
    <subcellularLocation>
        <location evidence="4">Nucleus</location>
    </subcellularLocation>
</comment>
<comment type="alternative products">
    <event type="alternative splicing"/>
    <isoform>
        <id>P15918-1</id>
        <name>1</name>
        <sequence type="displayed"/>
    </isoform>
    <isoform>
        <id>P15918-2</id>
        <name>2</name>
        <sequence type="described" ref="VSP_055883"/>
    </isoform>
</comment>
<comment type="tissue specificity">
    <text>Maturing lymphoid cells.</text>
</comment>
<comment type="domain">
    <text evidence="1">The RING-type zinc finger mediates the E3 ubiquitin-protein ligase activity.</text>
</comment>
<comment type="domain">
    <text evidence="4">The NBD (nonamer binding) DNA-binding domain mediates the specific binding to the nonamer RSS motif by forming a tightly interwoven homodimer that binds and synapses 2 nonamer elements, with each NBD making contact with both DNA molecules. Each RSS is composed of well-conserved heptamer (consensus 5'-CACAGTG-3') and nonamer (consensus 5'-ACAAAAACC-3') sequences separated by a spacer of either 12 bp or 23 bp.</text>
</comment>
<comment type="PTM">
    <text evidence="1">Autoubiquitinated in the presence of CDC34/UBCH3.</text>
</comment>
<comment type="disease" evidence="12">
    <disease id="DI-01360">
        <name>Combined cellular and humoral immune defects with granulomas</name>
        <acronym>CHIDG</acronym>
        <description>Immunodeficiency disease with granulomas in the skin, mucous membranes, and internal organs. Other characteristics include hypogammaglobulinemia, a diminished number of T and B-cells, and sparse thymic tissue on ultrasonography.</description>
        <dbReference type="MIM" id="233650"/>
    </disease>
    <text>The disease is caused by variants affecting the gene represented in this entry.</text>
</comment>
<comment type="disease" evidence="13 21">
    <disease id="DI-01019">
        <name>Severe combined immunodeficiency autosomal recessive T-cell-negative/B-cell-negative/NK-cell-positive</name>
        <acronym>T(-)B(-)NK(+) SCID</acronym>
        <description>A form of severe combined immunodeficiency (SCID), a genetically and clinically heterogeneous group of rare congenital disorders characterized by impairment of both humoral and cell-mediated immunity, leukopenia, and low or absent antibody levels. Patients present in infancy recurrent, persistent infections by opportunistic organisms. The common characteristic of all types of SCID is absence of T-cell-mediated cellular immunity due to a defect in T-cell development.</description>
        <dbReference type="MIM" id="601457"/>
    </disease>
    <text>The disease is caused by variants affecting the gene represented in this entry.</text>
</comment>
<comment type="disease" evidence="7 8 13 15 16 23">
    <disease id="DI-02093">
        <name>Omenn syndrome</name>
        <acronym>OS</acronym>
        <description>Severe immunodeficiency characterized by the presence of activated, anergic, oligoclonal T-cells, hypereosinophilia, and high IgE levels.</description>
        <dbReference type="MIM" id="603554"/>
    </disease>
    <text>The disease is caused by variants affecting the gene represented in this entry.</text>
</comment>
<comment type="disease" evidence="11">
    <disease id="DI-01182">
        <name>Alpha/beta T-cell lymphopenia, with gamma/delta T-cell expansion, severe cytomegalovirus infection and autoimmunity</name>
        <acronym>T-CMVA</acronym>
        <description>An immunological disorder characterized by oligoclonal expansion of TCR gamma/delta T-cells, TCR alpha/beta T-cell lymphopenia, severe, disseminated cytomegalovirus infection and autoimmune cytopenia.</description>
        <dbReference type="MIM" id="609889"/>
    </disease>
    <text>The disease is caused by variants affecting the gene represented in this entry.</text>
</comment>
<comment type="similarity">
    <text evidence="4">Belongs to the RAG1 family.</text>
</comment>
<comment type="sequence caution" evidence="25">
    <conflict type="erroneous gene model prediction">
        <sequence resource="EMBL-CDS" id="AAM77798"/>
    </conflict>
</comment>
<comment type="online information" name="Mendelian genes recombination activating gene 1 (RAG1)">
    <link uri="https://databases.lovd.nl/shared/genes/RAG1"/>
    <text>Leiden Open Variation Database (LOVD)</text>
</comment>
<accession>P15918</accession>
<accession>E9PPC4</accession>
<accession>Q8IY72</accession>
<accession>Q8NER2</accession>
<feature type="chain" id="PRO_0000056004" description="V(D)J recombination-activating protein 1">
    <location>
        <begin position="1"/>
        <end position="1043"/>
    </location>
</feature>
<feature type="zinc finger region" description="RING-type" evidence="3">
    <location>
        <begin position="293"/>
        <end position="332"/>
    </location>
</feature>
<feature type="zinc finger region" description="RAG1-type" evidence="5">
    <location>
        <begin position="354"/>
        <end position="383"/>
    </location>
</feature>
<feature type="DNA-binding region" description="NBD" evidence="4">
    <location>
        <begin position="392"/>
        <end position="459"/>
    </location>
</feature>
<feature type="region of interest" description="Interaction with importin alpha-1">
    <location>
        <begin position="1"/>
        <end position="288"/>
    </location>
</feature>
<feature type="region of interest" description="Disordered" evidence="6">
    <location>
        <begin position="40"/>
        <end position="80"/>
    </location>
</feature>
<feature type="compositionally biased region" description="Basic and acidic residues" evidence="6">
    <location>
        <begin position="40"/>
        <end position="54"/>
    </location>
</feature>
<feature type="binding site" evidence="1">
    <location>
        <position position="269"/>
    </location>
    <ligand>
        <name>Zn(2+)</name>
        <dbReference type="ChEBI" id="CHEBI:29105"/>
        <label>1</label>
    </ligand>
</feature>
<feature type="binding site" evidence="1">
    <location>
        <position position="273"/>
    </location>
    <ligand>
        <name>Zn(2+)</name>
        <dbReference type="ChEBI" id="CHEBI:29105"/>
        <label>1</label>
    </ligand>
</feature>
<feature type="binding site" evidence="1">
    <location>
        <position position="293"/>
    </location>
    <ligand>
        <name>Zn(2+)</name>
        <dbReference type="ChEBI" id="CHEBI:29105"/>
        <label>2</label>
    </ligand>
</feature>
<feature type="binding site" evidence="1">
    <location>
        <position position="296"/>
    </location>
    <ligand>
        <name>Zn(2+)</name>
        <dbReference type="ChEBI" id="CHEBI:29105"/>
        <label>1</label>
    </ligand>
</feature>
<feature type="binding site" evidence="1">
    <location>
        <position position="296"/>
    </location>
    <ligand>
        <name>Zn(2+)</name>
        <dbReference type="ChEBI" id="CHEBI:29105"/>
        <label>2</label>
    </ligand>
</feature>
<feature type="binding site" evidence="1">
    <location>
        <position position="298"/>
    </location>
    <ligand>
        <name>Zn(2+)</name>
        <dbReference type="ChEBI" id="CHEBI:29105"/>
        <label>1</label>
    </ligand>
</feature>
<feature type="binding site" evidence="1">
    <location>
        <position position="308"/>
    </location>
    <ligand>
        <name>Zn(2+)</name>
        <dbReference type="ChEBI" id="CHEBI:29105"/>
        <label>3</label>
    </ligand>
</feature>
<feature type="binding site" evidence="1">
    <location>
        <position position="310"/>
    </location>
    <ligand>
        <name>Zn(2+)</name>
        <dbReference type="ChEBI" id="CHEBI:29105"/>
        <label>3</label>
    </ligand>
</feature>
<feature type="binding site" evidence="1">
    <location>
        <position position="313"/>
    </location>
    <ligand>
        <name>Zn(2+)</name>
        <dbReference type="ChEBI" id="CHEBI:29105"/>
        <label>2</label>
    </ligand>
</feature>
<feature type="binding site" evidence="1">
    <location>
        <position position="316"/>
    </location>
    <ligand>
        <name>Zn(2+)</name>
        <dbReference type="ChEBI" id="CHEBI:29105"/>
        <label>2</label>
    </ligand>
</feature>
<feature type="binding site" evidence="1">
    <location>
        <position position="328"/>
    </location>
    <ligand>
        <name>Zn(2+)</name>
        <dbReference type="ChEBI" id="CHEBI:29105"/>
        <label>3</label>
    </ligand>
</feature>
<feature type="binding site" evidence="1">
    <location>
        <position position="331"/>
    </location>
    <ligand>
        <name>Zn(2+)</name>
        <dbReference type="ChEBI" id="CHEBI:29105"/>
        <label>3</label>
    </ligand>
</feature>
<feature type="binding site" evidence="5">
    <location>
        <position position="358"/>
    </location>
    <ligand>
        <name>Zn(2+)</name>
        <dbReference type="ChEBI" id="CHEBI:29105"/>
        <label>4</label>
    </ligand>
</feature>
<feature type="binding site" evidence="5">
    <location>
        <position position="363"/>
    </location>
    <ligand>
        <name>Zn(2+)</name>
        <dbReference type="ChEBI" id="CHEBI:29105"/>
        <label>4</label>
    </ligand>
</feature>
<feature type="binding site" evidence="5">
    <location>
        <position position="375"/>
    </location>
    <ligand>
        <name>Zn(2+)</name>
        <dbReference type="ChEBI" id="CHEBI:29105"/>
        <label>4</label>
    </ligand>
</feature>
<feature type="binding site" evidence="5">
    <location>
        <position position="379"/>
    </location>
    <ligand>
        <name>Zn(2+)</name>
        <dbReference type="ChEBI" id="CHEBI:29105"/>
        <label>4</label>
    </ligand>
</feature>
<feature type="binding site" evidence="1">
    <location>
        <position position="603"/>
    </location>
    <ligand>
        <name>a divalent metal cation</name>
        <dbReference type="ChEBI" id="CHEBI:60240"/>
        <note>catalytic</note>
    </ligand>
</feature>
<feature type="binding site" evidence="1">
    <location>
        <position position="711"/>
    </location>
    <ligand>
        <name>a divalent metal cation</name>
        <dbReference type="ChEBI" id="CHEBI:60240"/>
        <note>catalytic</note>
    </ligand>
</feature>
<feature type="binding site" evidence="1">
    <location>
        <position position="965"/>
    </location>
    <ligand>
        <name>a divalent metal cation</name>
        <dbReference type="ChEBI" id="CHEBI:60240"/>
        <note>catalytic</note>
    </ligand>
</feature>
<feature type="site" description="Essential for DNA hairpin formation, participates in base-stacking interactions near the cleavage site" evidence="1">
    <location>
        <position position="896"/>
    </location>
</feature>
<feature type="cross-link" description="Glycyl lysine isopeptide (Lys-Gly) (interchain with G-Cter in ubiquitin)" evidence="2">
    <location>
        <position position="234"/>
    </location>
</feature>
<feature type="splice variant" id="VSP_055883" description="In isoform 2." evidence="24">
    <original>YEGKITNYFHKTLAHVPEIIERDGSIGAWASEGNESGNKLFRRFRKMNARQSKCYEMEDVLKHHWLYTSKYLQKFMNAHNALKTSGFTMNPQASLGDPLGIEDSLESQDSMEF</original>
    <variation>N</variation>
    <location>
        <begin position="931"/>
        <end position="1043"/>
    </location>
</feature>
<feature type="sequence variant" id="VAR_007800" description="No effect on recombination activity; dbSNP:rs1801203." evidence="21">
    <original>A</original>
    <variation>V</variation>
    <location>
        <position position="156"/>
    </location>
</feature>
<feature type="sequence variant" id="VAR_029260" description="In dbSNP:rs4151027.">
    <original>S</original>
    <variation>L</variation>
    <location>
        <position position="169"/>
    </location>
</feature>
<feature type="sequence variant" id="VAR_007801" description="In dbSNP:rs199474683." evidence="22">
    <original>R</original>
    <variation>G</variation>
    <location>
        <position position="244"/>
    </location>
</feature>
<feature type="sequence variant" id="VAR_029261" description="In dbSNP:rs4151029.">
    <original>R</original>
    <variation>H</variation>
    <location>
        <position position="247"/>
    </location>
</feature>
<feature type="sequence variant" id="VAR_007802" description="In dbSNP:rs3740955." evidence="10 19 22">
    <original>H</original>
    <variation>R</variation>
    <location>
        <position position="249"/>
    </location>
</feature>
<feature type="sequence variant" id="VAR_020113" description="In dbSNP:rs4151030.">
    <original>D</original>
    <variation>E</variation>
    <location>
        <position position="302"/>
    </location>
</feature>
<feature type="sequence variant" id="VAR_045957" description="In CHIDG; reduced recombination activity; dbSNP:rs121918568." evidence="12">
    <original>R</original>
    <variation>W</variation>
    <location>
        <position position="314"/>
    </location>
</feature>
<feature type="sequence variant" id="VAR_025971" description="In OS; dbSNP:rs121918571." evidence="8">
    <original>C</original>
    <variation>Y</variation>
    <location>
        <position position="328"/>
    </location>
</feature>
<feature type="sequence variant" id="VAR_078305" description="Found in a patient with common variable immunodeficiency with B cell deficiency; decreased recombinant activity." evidence="17">
    <original>C</original>
    <variation>Y</variation>
    <location>
        <position position="358"/>
    </location>
</feature>
<feature type="sequence variant" id="VAR_078306" description="Found in a patient with T and B cell immunodeficiency and progressive multifocal leukoencephalopathy; uncertain significance; dbSNP:rs773272902." evidence="20">
    <original>H</original>
    <variation>D</variation>
    <location>
        <position position="375"/>
    </location>
</feature>
<feature type="sequence variant" id="VAR_008886" description="In OS; dbSNP:rs104894289." evidence="7 23">
    <original>R</original>
    <variation>C</variation>
    <location>
        <position position="396"/>
    </location>
</feature>
<feature type="sequence variant" id="VAR_008887" description="In OS; dbSNP:rs104894291." evidence="13 23">
    <original>R</original>
    <variation>H</variation>
    <location>
        <position position="396"/>
    </location>
</feature>
<feature type="sequence variant" id="VAR_025972" description="In OS; dbSNP:rs104894291." evidence="8">
    <original>R</original>
    <variation>L</variation>
    <location>
        <position position="396"/>
    </location>
</feature>
<feature type="sequence variant" id="VAR_025973" description="In OS; dbSNP:rs199474682." evidence="8 13">
    <original>S</original>
    <variation>P</variation>
    <location>
        <position position="401"/>
    </location>
</feature>
<feature type="sequence variant" id="VAR_025974" description="In OS; found in patients with an atypical form of severe combined immunodeficiency/Omenn syndrome; dbSNP:rs199474684." evidence="8">
    <original>R</original>
    <variation>Q</variation>
    <location>
        <position position="410"/>
    </location>
</feature>
<feature type="sequence variant" id="VAR_008888" description="In OS; dbSNP:rs104894292." evidence="23">
    <original>D</original>
    <variation>G</variation>
    <location>
        <position position="429"/>
    </location>
</feature>
<feature type="sequence variant" id="VAR_025975" description="In OS and T(-)B(-)NK(+) SCID; found in a patient with an atypical form of severe combined immunodeficiency/Omenn syndrome; dbSNP:rs199474679." evidence="8 13">
    <original>V</original>
    <variation>M</variation>
    <location>
        <position position="433"/>
    </location>
</feature>
<feature type="sequence variant" id="VAR_025976" description="In OS; dbSNP:rs141524540." evidence="8">
    <original>M</original>
    <variation>V</variation>
    <location>
        <position position="435"/>
    </location>
</feature>
<feature type="sequence variant" id="VAR_025977" description="In OS; found in patients with an atypical form of severe combined immunodeficiency/Omenn syndrome; dbSNP:rs199474685." evidence="8">
    <original>A</original>
    <variation>V</variation>
    <location>
        <position position="444"/>
    </location>
</feature>
<feature type="sequence variant" id="VAR_029262" description="In dbSNP:rs4151031.">
    <original>R</original>
    <variation>K</variation>
    <location>
        <position position="449"/>
    </location>
</feature>
<feature type="sequence variant" id="VAR_067274" description="In OS; dbSNP:rs199474677." evidence="15">
    <original>L</original>
    <variation>Q</variation>
    <location>
        <position position="454"/>
    </location>
</feature>
<feature type="sequence variant" id="VAR_067275" description="Found in a patient with relatively late onset of infections and isolated T-cell lymphopenia; likely pathogenic; also found in a patient with T and B cell immunodeficiency and progressive multifocal leukoencephalopathy; decreases recombination activity; no effect on protein abundance; dbSNP:rs199474678." evidence="14 20">
    <original>R</original>
    <variation>C</variation>
    <location>
        <position position="474"/>
    </location>
</feature>
<feature type="sequence variant" id="VAR_025978" description="In OS; found in patients with an atypical form of severe combined immunodeficiency/Omenn syndrome; dbSNP:rs199474686." evidence="8">
    <original>R</original>
    <variation>H</variation>
    <location>
        <position position="474"/>
    </location>
</feature>
<feature type="sequence variant" id="VAR_025979" description="In OS; also found in CHIDG when associated in cis with T-507; dbSNP:rs104894298." evidence="8 12">
    <original>R</original>
    <variation>W</variation>
    <location>
        <position position="507"/>
    </location>
</feature>
<feature type="sequence variant" id="VAR_025980" description="In OS; also found in patients with an atypical form of severe combined immunodeficiency/Omenn syndrome; dbSNP:rs193922461." evidence="8 18">
    <original>W</original>
    <variation>C</variation>
    <location>
        <position position="522"/>
    </location>
</feature>
<feature type="sequence variant" id="VAR_029263" description="In dbSNP:rs4151032.">
    <original>P</original>
    <variation>S</variation>
    <location>
        <position position="525"/>
    </location>
</feature>
<feature type="sequence variant" id="VAR_025981" description="In T(-)B(-)NK(+) SCID and OS; also found in a patient with an atypical form of severe combined immunodeficiency/Omenn syndrome; decreased recombination activity; dbSNP:rs199474681." evidence="8 9 13">
    <original>R</original>
    <variation>S</variation>
    <location>
        <position position="559"/>
    </location>
</feature>
<feature type="sequence variant" id="VAR_008890" description="In OS; dbSNP:rs104894285." evidence="23">
    <original>R</original>
    <variation>C</variation>
    <location>
        <position position="561"/>
    </location>
</feature>
<feature type="sequence variant" id="VAR_008889" description="In OS; dbSNP:rs104894284." evidence="23">
    <original>R</original>
    <variation>H</variation>
    <location>
        <position position="561"/>
    </location>
</feature>
<feature type="sequence variant" id="VAR_078307" description="Found in a patient with an atypical form of combined immunodeficiency; uncertain significance; dbSNP:rs1850821995." evidence="18">
    <original>H</original>
    <variation>R</variation>
    <location>
        <position position="612"/>
    </location>
</feature>
<feature type="sequence variant" id="VAR_025982" description="In OS; dbSNP:rs199474688." evidence="8">
    <original>R</original>
    <variation>C</variation>
    <location>
        <position position="624"/>
    </location>
</feature>
<feature type="sequence variant" id="VAR_007803" description="In T(-)B(-)NK(+) SCID; decreased recombination activity; dbSNP:rs199474680." evidence="13 21">
    <original>R</original>
    <variation>H</variation>
    <location>
        <position position="624"/>
    </location>
</feature>
<feature type="sequence variant" id="VAR_025983" description="In OS; dbSNP:rs199474689." evidence="8">
    <original>E</original>
    <variation>G</variation>
    <location>
        <position position="669"/>
    </location>
</feature>
<feature type="sequence variant" id="VAR_067276" description="In OS; also in a patient with multiple autoimmune disorders; dbSNP:rs199474676." evidence="16">
    <original>R</original>
    <variation>W</variation>
    <location>
        <position position="699"/>
    </location>
</feature>
<feature type="sequence variant" id="VAR_007804" description="In T(-)B(-)NK(+) SCID; decreased recombination activity; dbSNP:rs28933392." evidence="21">
    <original>E</original>
    <variation>K</variation>
    <location>
        <position position="722"/>
    </location>
</feature>
<feature type="sequence variant" id="VAR_008891" description="In OS; also found in CHIDG when associated in cis with T-507; dbSNP:rs104894286." evidence="12 23">
    <original>R</original>
    <variation>H</variation>
    <location>
        <position position="737"/>
    </location>
</feature>
<feature type="sequence variant" id="VAR_025984" description="In OS; found in patients with an atypical form of severe combined immunodeficiency/Omenn syndrome; dbSNP:rs199474687." evidence="8">
    <original>H</original>
    <variation>L</variation>
    <location>
        <position position="753"/>
    </location>
</feature>
<feature type="sequence variant" id="VAR_078308" description="In T(-)B(-)NK(+) SCID; uncertain significance." evidence="21">
    <location>
        <begin position="774"/>
        <end position="1043"/>
    </location>
</feature>
<feature type="sequence variant" id="VAR_045958" description="In CHIDG; reduced recombination activity; dbSNP:rs121918569." evidence="12">
    <original>R</original>
    <variation>Q</variation>
    <location>
        <position position="778"/>
    </location>
</feature>
<feature type="sequence variant" id="VAR_008892" description="In dbSNP:rs2227973.">
    <original>K</original>
    <variation>R</variation>
    <location>
        <position position="820"/>
    </location>
</feature>
<feature type="sequence variant" id="VAR_025985" description="In T-CMVA; also found in a patient with an atypical form of severe combined immunodeficiency /Omenn syndrome; dbSNP:rs104894287." evidence="11">
    <original>R</original>
    <variation>W</variation>
    <location>
        <position position="841"/>
    </location>
</feature>
<feature type="sequence variant" id="VAR_025986" description="Found in a patient with severe combined immunodeficiency with maternal fetal engraftment; likely pathogenic; dbSNP:rs199474690." evidence="8">
    <original>N</original>
    <variation>I</variation>
    <location>
        <position position="855"/>
    </location>
</feature>
<feature type="sequence variant" id="VAR_020114" description="In dbSNP:rs4151033.">
    <original>E</original>
    <variation>K</variation>
    <location>
        <position position="880"/>
    </location>
</feature>
<feature type="sequence variant" id="VAR_008893" description="In OS; dbSNP:rs199474691." evidence="7">
    <original>L</original>
    <variation>R</variation>
    <location>
        <position position="885"/>
    </location>
</feature>
<feature type="sequence variant" id="VAR_029264" description="In dbSNP:rs4151034.">
    <original>D</original>
    <variation>N</variation>
    <location>
        <position position="887"/>
    </location>
</feature>
<feature type="sequence variant" id="VAR_078309" description="In T(-)B(-)NK(+) SCID; uncertain significance; also found in patients with an atypical form of severe combined immunodeficiency/Omenn syndrome; uncertain significance; loss of recombination activity." evidence="9 18 21">
    <location>
        <begin position="897"/>
        <end position="1043"/>
    </location>
</feature>
<feature type="sequence variant" id="VAR_008894" description="In OS; dbSNP:rs104894290." evidence="23">
    <original>Y</original>
    <variation>C</variation>
    <location>
        <position position="912"/>
    </location>
</feature>
<feature type="sequence variant" id="VAR_078310" description="In T(-)B(-)NK(+) SCID; decreased recombination activity." evidence="21">
    <location>
        <begin position="938"/>
        <end position="1043"/>
    </location>
</feature>
<feature type="sequence variant" id="VAR_025987" description="In OS; dbSNP:rs150739647." evidence="8">
    <original>R</original>
    <variation>Q</variation>
    <location>
        <position position="975"/>
    </location>
</feature>
<feature type="sequence variant" id="VAR_045959" description="In CHIDG; reduced recombination activity; dbSNP:rs121918570." evidence="12">
    <original>R</original>
    <variation>W</variation>
    <location>
        <position position="975"/>
    </location>
</feature>
<feature type="sequence variant" id="VAR_025988" description="In T-CMVA; dbSNP:rs104894288." evidence="11">
    <original>Q</original>
    <variation>P</variation>
    <location>
        <position position="981"/>
    </location>
</feature>
<name>RAG1_HUMAN</name>
<protein>
    <recommendedName>
        <fullName>V(D)J recombination-activating protein 1</fullName>
        <shortName>RAG-1</shortName>
    </recommendedName>
    <alternativeName>
        <fullName>RING finger protein 74</fullName>
    </alternativeName>
    <domain>
        <recommendedName>
            <fullName>Endonuclease RAG1</fullName>
            <ecNumber>3.1.-.-</ecNumber>
        </recommendedName>
    </domain>
    <domain>
        <recommendedName>
            <fullName>E3 ubiquitin-protein ligase RAG1</fullName>
            <ecNumber>2.3.2.27</ecNumber>
        </recommendedName>
        <alternativeName>
            <fullName evidence="25">RING-type E3 ubiquitin transferase RAG1</fullName>
        </alternativeName>
    </domain>
</protein>
<keyword id="KW-0025">Alternative splicing</keyword>
<keyword id="KW-0156">Chromatin regulator</keyword>
<keyword id="KW-0225">Disease variant</keyword>
<keyword id="KW-0233">DNA recombination</keyword>
<keyword id="KW-0238">DNA-binding</keyword>
<keyword id="KW-0255">Endonuclease</keyword>
<keyword id="KW-0378">Hydrolase</keyword>
<keyword id="KW-1017">Isopeptide bond</keyword>
<keyword id="KW-0479">Metal-binding</keyword>
<keyword id="KW-0511">Multifunctional enzyme</keyword>
<keyword id="KW-0540">Nuclease</keyword>
<keyword id="KW-0539">Nucleus</keyword>
<keyword id="KW-1267">Proteomics identification</keyword>
<keyword id="KW-1185">Reference proteome</keyword>
<keyword id="KW-0705">SCID</keyword>
<keyword id="KW-0808">Transferase</keyword>
<keyword id="KW-0832">Ubl conjugation</keyword>
<keyword id="KW-0833">Ubl conjugation pathway</keyword>
<keyword id="KW-0862">Zinc</keyword>
<keyword id="KW-0863">Zinc-finger</keyword>
<proteinExistence type="evidence at protein level"/>
<evidence type="ECO:0000250" key="1"/>
<evidence type="ECO:0000250" key="2">
    <source>
        <dbReference type="UniProtKB" id="P15919"/>
    </source>
</evidence>
<evidence type="ECO:0000255" key="3">
    <source>
        <dbReference type="PROSITE-ProRule" id="PRU00175"/>
    </source>
</evidence>
<evidence type="ECO:0000255" key="4">
    <source>
        <dbReference type="PROSITE-ProRule" id="PRU00820"/>
    </source>
</evidence>
<evidence type="ECO:0000255" key="5">
    <source>
        <dbReference type="PROSITE-ProRule" id="PRU01101"/>
    </source>
</evidence>
<evidence type="ECO:0000256" key="6">
    <source>
        <dbReference type="SAM" id="MobiDB-lite"/>
    </source>
</evidence>
<evidence type="ECO:0000269" key="7">
    <source>
    </source>
</evidence>
<evidence type="ECO:0000269" key="8">
    <source>
    </source>
</evidence>
<evidence type="ECO:0000269" key="9">
    <source>
    </source>
</evidence>
<evidence type="ECO:0000269" key="10">
    <source>
    </source>
</evidence>
<evidence type="ECO:0000269" key="11">
    <source>
    </source>
</evidence>
<evidence type="ECO:0000269" key="12">
    <source>
    </source>
</evidence>
<evidence type="ECO:0000269" key="13">
    <source>
    </source>
</evidence>
<evidence type="ECO:0000269" key="14">
    <source>
    </source>
</evidence>
<evidence type="ECO:0000269" key="15">
    <source>
    </source>
</evidence>
<evidence type="ECO:0000269" key="16">
    <source>
    </source>
</evidence>
<evidence type="ECO:0000269" key="17">
    <source>
    </source>
</evidence>
<evidence type="ECO:0000269" key="18">
    <source>
    </source>
</evidence>
<evidence type="ECO:0000269" key="19">
    <source>
    </source>
</evidence>
<evidence type="ECO:0000269" key="20">
    <source>
    </source>
</evidence>
<evidence type="ECO:0000269" key="21">
    <source>
    </source>
</evidence>
<evidence type="ECO:0000269" key="22">
    <source>
    </source>
</evidence>
<evidence type="ECO:0000269" key="23">
    <source>
    </source>
</evidence>
<evidence type="ECO:0000303" key="24">
    <source>
    </source>
</evidence>
<evidence type="ECO:0000305" key="25"/>
<gene>
    <name type="primary">RAG1</name>
    <name type="synonym">RNF74</name>
</gene>